<comment type="similarity">
    <text evidence="2">Belongs to the ArsC family.</text>
</comment>
<accession>P44515</accession>
<dbReference type="EMBL" id="L42023">
    <property type="protein sequence ID" value="AAC21777.1"/>
    <property type="molecule type" value="Genomic_DNA"/>
</dbReference>
<dbReference type="PIR" id="F64142">
    <property type="entry name" value="F64142"/>
</dbReference>
<dbReference type="RefSeq" id="NP_438277.1">
    <property type="nucleotide sequence ID" value="NC_000907.1"/>
</dbReference>
<dbReference type="SMR" id="P44515"/>
<dbReference type="STRING" id="71421.HI_0103"/>
<dbReference type="EnsemblBacteria" id="AAC21777">
    <property type="protein sequence ID" value="AAC21777"/>
    <property type="gene ID" value="HI_0103"/>
</dbReference>
<dbReference type="KEGG" id="hin:HI_0103"/>
<dbReference type="PATRIC" id="fig|71421.8.peg.106"/>
<dbReference type="eggNOG" id="COG1393">
    <property type="taxonomic scope" value="Bacteria"/>
</dbReference>
<dbReference type="HOGENOM" id="CLU_116644_2_1_6"/>
<dbReference type="OrthoDB" id="9803749at2"/>
<dbReference type="PhylomeDB" id="P44515"/>
<dbReference type="BioCyc" id="HINF71421:G1GJ1-107-MONOMER"/>
<dbReference type="Proteomes" id="UP000000579">
    <property type="component" value="Chromosome"/>
</dbReference>
<dbReference type="CDD" id="cd03035">
    <property type="entry name" value="ArsC_Yffb"/>
    <property type="match status" value="1"/>
</dbReference>
<dbReference type="Gene3D" id="3.40.30.10">
    <property type="entry name" value="Glutaredoxin"/>
    <property type="match status" value="1"/>
</dbReference>
<dbReference type="InterPro" id="IPR006660">
    <property type="entry name" value="Arsenate_reductase-like"/>
</dbReference>
<dbReference type="InterPro" id="IPR036249">
    <property type="entry name" value="Thioredoxin-like_sf"/>
</dbReference>
<dbReference type="InterPro" id="IPR006504">
    <property type="entry name" value="Tscrpt_reg_Spx/MgsR"/>
</dbReference>
<dbReference type="NCBIfam" id="TIGR01617">
    <property type="entry name" value="arsC_related"/>
    <property type="match status" value="1"/>
</dbReference>
<dbReference type="NCBIfam" id="NF008107">
    <property type="entry name" value="PRK10853.1"/>
    <property type="match status" value="1"/>
</dbReference>
<dbReference type="PANTHER" id="PTHR30041">
    <property type="entry name" value="ARSENATE REDUCTASE"/>
    <property type="match status" value="1"/>
</dbReference>
<dbReference type="PANTHER" id="PTHR30041:SF8">
    <property type="entry name" value="PROTEIN YFFB"/>
    <property type="match status" value="1"/>
</dbReference>
<dbReference type="Pfam" id="PF03960">
    <property type="entry name" value="ArsC"/>
    <property type="match status" value="1"/>
</dbReference>
<dbReference type="SUPFAM" id="SSF52833">
    <property type="entry name" value="Thioredoxin-like"/>
    <property type="match status" value="1"/>
</dbReference>
<dbReference type="PROSITE" id="PS51353">
    <property type="entry name" value="ARSC"/>
    <property type="match status" value="1"/>
</dbReference>
<organism>
    <name type="scientific">Haemophilus influenzae (strain ATCC 51907 / DSM 11121 / KW20 / Rd)</name>
    <dbReference type="NCBI Taxonomy" id="71421"/>
    <lineage>
        <taxon>Bacteria</taxon>
        <taxon>Pseudomonadati</taxon>
        <taxon>Pseudomonadota</taxon>
        <taxon>Gammaproteobacteria</taxon>
        <taxon>Pasteurellales</taxon>
        <taxon>Pasteurellaceae</taxon>
        <taxon>Haemophilus</taxon>
    </lineage>
</organism>
<protein>
    <recommendedName>
        <fullName>Uncharacterized protein HI_0103</fullName>
    </recommendedName>
</protein>
<gene>
    <name type="ordered locus">HI_0103</name>
</gene>
<sequence>MITVYGIKNCDTVKKALKWLADHNIEHKLHDYRVDGLDLNFLTQAETQFGWDVLVNKRSTTWRNLDEQVKNSLDKTTALSVLAENPTLIKRPIILQDGKALIGFNEKEYQAAFA</sequence>
<evidence type="ECO:0000255" key="1">
    <source>
        <dbReference type="PROSITE-ProRule" id="PRU01282"/>
    </source>
</evidence>
<evidence type="ECO:0000305" key="2"/>
<name>Y103_HAEIN</name>
<feature type="chain" id="PRO_0000169230" description="Uncharacterized protein HI_0103">
    <location>
        <begin position="1"/>
        <end position="114"/>
    </location>
</feature>
<feature type="active site" evidence="1">
    <location>
        <position position="10"/>
    </location>
</feature>
<proteinExistence type="evidence at protein level"/>
<keyword id="KW-1185">Reference proteome</keyword>
<reference key="1">
    <citation type="journal article" date="1995" name="Science">
        <title>Whole-genome random sequencing and assembly of Haemophilus influenzae Rd.</title>
        <authorList>
            <person name="Fleischmann R.D."/>
            <person name="Adams M.D."/>
            <person name="White O."/>
            <person name="Clayton R.A."/>
            <person name="Kirkness E.F."/>
            <person name="Kerlavage A.R."/>
            <person name="Bult C.J."/>
            <person name="Tomb J.-F."/>
            <person name="Dougherty B.A."/>
            <person name="Merrick J.M."/>
            <person name="McKenney K."/>
            <person name="Sutton G.G."/>
            <person name="FitzHugh W."/>
            <person name="Fields C.A."/>
            <person name="Gocayne J.D."/>
            <person name="Scott J.D."/>
            <person name="Shirley R."/>
            <person name="Liu L.-I."/>
            <person name="Glodek A."/>
            <person name="Kelley J.M."/>
            <person name="Weidman J.F."/>
            <person name="Phillips C.A."/>
            <person name="Spriggs T."/>
            <person name="Hedblom E."/>
            <person name="Cotton M.D."/>
            <person name="Utterback T.R."/>
            <person name="Hanna M.C."/>
            <person name="Nguyen D.T."/>
            <person name="Saudek D.M."/>
            <person name="Brandon R.C."/>
            <person name="Fine L.D."/>
            <person name="Fritchman J.L."/>
            <person name="Fuhrmann J.L."/>
            <person name="Geoghagen N.S.M."/>
            <person name="Gnehm C.L."/>
            <person name="McDonald L.A."/>
            <person name="Small K.V."/>
            <person name="Fraser C.M."/>
            <person name="Smith H.O."/>
            <person name="Venter J.C."/>
        </authorList>
    </citation>
    <scope>NUCLEOTIDE SEQUENCE [LARGE SCALE GENOMIC DNA]</scope>
    <source>
        <strain>ATCC 51907 / DSM 11121 / KW20 / Rd</strain>
    </source>
</reference>
<reference key="2">
    <citation type="journal article" date="2000" name="Electrophoresis">
        <title>Two-dimensional map of the proteome of Haemophilus influenzae.</title>
        <authorList>
            <person name="Langen H."/>
            <person name="Takacs B."/>
            <person name="Evers S."/>
            <person name="Berndt P."/>
            <person name="Lahm H.W."/>
            <person name="Wipf B."/>
            <person name="Gray C."/>
            <person name="Fountoulakis M."/>
        </authorList>
    </citation>
    <scope>IDENTIFICATION BY MASS SPECTROMETRY</scope>
    <source>
        <strain>ATCC 51907 / DSM 11121 / KW20 / Rd</strain>
    </source>
</reference>